<proteinExistence type="inferred from homology"/>
<comment type="function">
    <text evidence="1">Transport of citrate across inner mitochondrial membrane.</text>
</comment>
<comment type="subcellular location">
    <subcellularLocation>
        <location evidence="1">Mitochondrion inner membrane</location>
        <topology evidence="1">Multi-pass membrane protein</topology>
    </subcellularLocation>
</comment>
<comment type="similarity">
    <text evidence="3">Belongs to the mitochondrial carrier (TC 2.A.29) family.</text>
</comment>
<organism>
    <name type="scientific">Caenorhabditis elegans</name>
    <dbReference type="NCBI Taxonomy" id="6239"/>
    <lineage>
        <taxon>Eukaryota</taxon>
        <taxon>Metazoa</taxon>
        <taxon>Ecdysozoa</taxon>
        <taxon>Nematoda</taxon>
        <taxon>Chromadorea</taxon>
        <taxon>Rhabditida</taxon>
        <taxon>Rhabditina</taxon>
        <taxon>Rhabditomorpha</taxon>
        <taxon>Rhabditoidea</taxon>
        <taxon>Rhabditidae</taxon>
        <taxon>Peloderinae</taxon>
        <taxon>Caenorhabditis</taxon>
    </lineage>
</organism>
<name>TXTP_CAEEL</name>
<protein>
    <recommendedName>
        <fullName>Putative tricarboxylate transport protein, mitochondrial</fullName>
    </recommendedName>
    <alternativeName>
        <fullName>Citrate transport protein</fullName>
        <shortName>CTP</shortName>
    </alternativeName>
</protein>
<accession>P34519</accession>
<dbReference type="EMBL" id="Z22180">
    <property type="protein sequence ID" value="CAA80178.1"/>
    <property type="molecule type" value="Genomic_DNA"/>
</dbReference>
<dbReference type="PIR" id="H88567">
    <property type="entry name" value="H88567"/>
</dbReference>
<dbReference type="RefSeq" id="NP_499187.1">
    <property type="nucleotide sequence ID" value="NM_066786.6"/>
</dbReference>
<dbReference type="SMR" id="P34519"/>
<dbReference type="BioGRID" id="41592">
    <property type="interactions" value="5"/>
</dbReference>
<dbReference type="FunCoup" id="P34519">
    <property type="interactions" value="2014"/>
</dbReference>
<dbReference type="STRING" id="6239.K11H3.3.1"/>
<dbReference type="PaxDb" id="6239-K11H3.3"/>
<dbReference type="PeptideAtlas" id="P34519"/>
<dbReference type="EnsemblMetazoa" id="K11H3.3.1">
    <property type="protein sequence ID" value="K11H3.3.1"/>
    <property type="gene ID" value="WBGene00010780"/>
</dbReference>
<dbReference type="GeneID" id="176398"/>
<dbReference type="KEGG" id="cel:CELE_K11H3.3"/>
<dbReference type="UCSC" id="K11H3.3">
    <property type="organism name" value="c. elegans"/>
</dbReference>
<dbReference type="AGR" id="WB:WBGene00010780"/>
<dbReference type="CTD" id="176398"/>
<dbReference type="WormBase" id="K11H3.3">
    <property type="protein sequence ID" value="CE00474"/>
    <property type="gene ID" value="WBGene00010780"/>
</dbReference>
<dbReference type="eggNOG" id="KOG0756">
    <property type="taxonomic scope" value="Eukaryota"/>
</dbReference>
<dbReference type="GeneTree" id="ENSGT00940000172429"/>
<dbReference type="HOGENOM" id="CLU_015166_5_1_1"/>
<dbReference type="InParanoid" id="P34519"/>
<dbReference type="OMA" id="KDWYKGG"/>
<dbReference type="OrthoDB" id="44467at2759"/>
<dbReference type="PhylomeDB" id="P34519"/>
<dbReference type="Reactome" id="R-CEL-428643">
    <property type="pathway name" value="Organic anion transporters"/>
</dbReference>
<dbReference type="PRO" id="PR:P34519"/>
<dbReference type="Proteomes" id="UP000001940">
    <property type="component" value="Chromosome III"/>
</dbReference>
<dbReference type="Bgee" id="WBGene00010780">
    <property type="expression patterns" value="Expressed in adult organism and 4 other cell types or tissues"/>
</dbReference>
<dbReference type="GO" id="GO:0005743">
    <property type="term" value="C:mitochondrial inner membrane"/>
    <property type="evidence" value="ECO:0007669"/>
    <property type="project" value="UniProtKB-SubCell"/>
</dbReference>
<dbReference type="GO" id="GO:0005739">
    <property type="term" value="C:mitochondrion"/>
    <property type="evidence" value="ECO:0000318"/>
    <property type="project" value="GO_Central"/>
</dbReference>
<dbReference type="GO" id="GO:0071913">
    <property type="term" value="F:citrate secondary active transmembrane transporter activity"/>
    <property type="evidence" value="ECO:0000318"/>
    <property type="project" value="GO_Central"/>
</dbReference>
<dbReference type="GO" id="GO:0006843">
    <property type="term" value="P:mitochondrial citrate transmembrane transport"/>
    <property type="evidence" value="ECO:0000318"/>
    <property type="project" value="GO_Central"/>
</dbReference>
<dbReference type="FunFam" id="1.50.40.10:FF:000007">
    <property type="entry name" value="Mitochondrial tricarboxylate transport protein-like"/>
    <property type="match status" value="1"/>
</dbReference>
<dbReference type="Gene3D" id="1.50.40.10">
    <property type="entry name" value="Mitochondrial carrier domain"/>
    <property type="match status" value="1"/>
</dbReference>
<dbReference type="InterPro" id="IPR018108">
    <property type="entry name" value="Mitochondrial_sb/sol_carrier"/>
</dbReference>
<dbReference type="InterPro" id="IPR023395">
    <property type="entry name" value="Mt_carrier_dom_sf"/>
</dbReference>
<dbReference type="InterPro" id="IPR049563">
    <property type="entry name" value="TXTP-like"/>
</dbReference>
<dbReference type="PANTHER" id="PTHR45788">
    <property type="entry name" value="SUCCINATE/FUMARATE MITOCHONDRIAL TRANSPORTER-RELATED"/>
    <property type="match status" value="1"/>
</dbReference>
<dbReference type="PANTHER" id="PTHR45788:SF4">
    <property type="entry name" value="TRICARBOXYLATE TRANSPORT PROTEIN, MITOCHONDRIAL"/>
    <property type="match status" value="1"/>
</dbReference>
<dbReference type="Pfam" id="PF00153">
    <property type="entry name" value="Mito_carr"/>
    <property type="match status" value="3"/>
</dbReference>
<dbReference type="SUPFAM" id="SSF103506">
    <property type="entry name" value="Mitochondrial carrier"/>
    <property type="match status" value="1"/>
</dbReference>
<dbReference type="PROSITE" id="PS50920">
    <property type="entry name" value="SOLCAR"/>
    <property type="match status" value="3"/>
</dbReference>
<evidence type="ECO:0000250" key="1"/>
<evidence type="ECO:0000255" key="2"/>
<evidence type="ECO:0000305" key="3"/>
<reference key="1">
    <citation type="journal article" date="1994" name="Nature">
        <title>2.2 Mb of contiguous nucleotide sequence from chromosome III of C. elegans.</title>
        <authorList>
            <person name="Wilson R."/>
            <person name="Ainscough R."/>
            <person name="Anderson K."/>
            <person name="Baynes C."/>
            <person name="Berks M."/>
            <person name="Bonfield J."/>
            <person name="Burton J."/>
            <person name="Connell M."/>
            <person name="Copsey T."/>
            <person name="Cooper J."/>
            <person name="Coulson A."/>
            <person name="Craxton M."/>
            <person name="Dear S."/>
            <person name="Du Z."/>
            <person name="Durbin R."/>
            <person name="Favello A."/>
            <person name="Fraser A."/>
            <person name="Fulton L."/>
            <person name="Gardner A."/>
            <person name="Green P."/>
            <person name="Hawkins T."/>
            <person name="Hillier L."/>
            <person name="Jier M."/>
            <person name="Johnston L."/>
            <person name="Jones M."/>
            <person name="Kershaw J."/>
            <person name="Kirsten J."/>
            <person name="Laisster N."/>
            <person name="Latreille P."/>
            <person name="Lightning J."/>
            <person name="Lloyd C."/>
            <person name="Mortimore B."/>
            <person name="O'Callaghan M."/>
            <person name="Parsons J."/>
            <person name="Percy C."/>
            <person name="Rifken L."/>
            <person name="Roopra A."/>
            <person name="Saunders D."/>
            <person name="Shownkeen R."/>
            <person name="Sims M."/>
            <person name="Smaldon N."/>
            <person name="Smith A."/>
            <person name="Smith M."/>
            <person name="Sonnhammer E."/>
            <person name="Staden R."/>
            <person name="Sulston J."/>
            <person name="Thierry-Mieg J."/>
            <person name="Thomas K."/>
            <person name="Vaudin M."/>
            <person name="Vaughan K."/>
            <person name="Waterston R."/>
            <person name="Watson A."/>
            <person name="Weinstock L."/>
            <person name="Wilkinson-Sproat J."/>
            <person name="Wohldman P."/>
        </authorList>
    </citation>
    <scope>NUCLEOTIDE SEQUENCE [LARGE SCALE GENOMIC DNA]</scope>
    <source>
        <strain>Bristol N2</strain>
    </source>
</reference>
<reference key="2">
    <citation type="journal article" date="1998" name="Science">
        <title>Genome sequence of the nematode C. elegans: a platform for investigating biology.</title>
        <authorList>
            <consortium name="The C. elegans sequencing consortium"/>
        </authorList>
    </citation>
    <scope>NUCLEOTIDE SEQUENCE [LARGE SCALE GENOMIC DNA]</scope>
    <source>
        <strain>Bristol N2</strain>
    </source>
</reference>
<gene>
    <name type="ORF">K11H3.3</name>
</gene>
<feature type="transit peptide" description="Mitochondrion" evidence="2">
    <location>
        <begin position="1"/>
        <end status="unknown"/>
    </location>
</feature>
<feature type="chain" id="PRO_0000019264" description="Putative tricarboxylate transport protein, mitochondrial">
    <location>
        <begin status="unknown"/>
        <end position="312"/>
    </location>
</feature>
<feature type="transmembrane region" description="Helical; Name=1" evidence="2">
    <location>
        <begin position="29"/>
        <end position="49"/>
    </location>
</feature>
<feature type="transmembrane region" description="Helical; Name=2" evidence="2">
    <location>
        <begin position="75"/>
        <end position="95"/>
    </location>
</feature>
<feature type="transmembrane region" description="Helical; Name=3" evidence="2">
    <location>
        <begin position="126"/>
        <end position="146"/>
    </location>
</feature>
<feature type="transmembrane region" description="Helical; Name=4" evidence="2">
    <location>
        <begin position="164"/>
        <end position="184"/>
    </location>
</feature>
<feature type="transmembrane region" description="Helical; Name=5" evidence="2">
    <location>
        <begin position="221"/>
        <end position="241"/>
    </location>
</feature>
<feature type="transmembrane region" description="Helical; Name=6" evidence="2">
    <location>
        <begin position="286"/>
        <end position="306"/>
    </location>
</feature>
<feature type="repeat" description="Solcar 1">
    <location>
        <begin position="23"/>
        <end position="111"/>
    </location>
</feature>
<feature type="repeat" description="Solcar 2">
    <location>
        <begin position="122"/>
        <end position="208"/>
    </location>
</feature>
<feature type="repeat" description="Solcar 3">
    <location>
        <begin position="218"/>
        <end position="303"/>
    </location>
</feature>
<sequence>MSGIQPVPGAKPLSMWQQYGPSEKTVRGIVIGGITGGIEICITFPTEYVKTQLQLDERSATPKFRGPIDCVKQTVNGHGFFGLYRGLSVLLYGSIPKSSFRFGTFEYLKSQAADERGNLSPVMRLLCGLGAGLSEAVFAVTPMETVKVKFIHDQGLAQPKYKGFVHGVGCIVKAEGLGGIYKGVTATMAKQGSNQAIRFFVMETLKDWYRGGDNTQPISKPIVGLMGAVAGAASVYGNTPIDVVKTRMQGLEAKKYKNTLDCAMQIWKKEGFFAFYKGTVPRLSRVCLDVGITFMIYDSIIEFLDVYWKKQQ</sequence>
<keyword id="KW-0472">Membrane</keyword>
<keyword id="KW-0496">Mitochondrion</keyword>
<keyword id="KW-0999">Mitochondrion inner membrane</keyword>
<keyword id="KW-1185">Reference proteome</keyword>
<keyword id="KW-0677">Repeat</keyword>
<keyword id="KW-0809">Transit peptide</keyword>
<keyword id="KW-0812">Transmembrane</keyword>
<keyword id="KW-1133">Transmembrane helix</keyword>
<keyword id="KW-0813">Transport</keyword>